<protein>
    <recommendedName>
        <fullName evidence="1">Large ribosomal subunit protein uL29</fullName>
    </recommendedName>
    <alternativeName>
        <fullName evidence="2">50S ribosomal protein L29</fullName>
    </alternativeName>
</protein>
<keyword id="KW-0687">Ribonucleoprotein</keyword>
<keyword id="KW-0689">Ribosomal protein</keyword>
<sequence>MRARELRAQTLDQMKDELAKLKKEQFNLRFQKATGQLEKAARVRQVRRDIARVKTFLRQKIKESKV</sequence>
<name>RL29_BARQU</name>
<proteinExistence type="inferred from homology"/>
<gene>
    <name evidence="1" type="primary">rpmC</name>
    <name type="ordered locus">BQ08150</name>
</gene>
<organism>
    <name type="scientific">Bartonella quintana (strain Toulouse)</name>
    <name type="common">Rochalimaea quintana</name>
    <dbReference type="NCBI Taxonomy" id="283165"/>
    <lineage>
        <taxon>Bacteria</taxon>
        <taxon>Pseudomonadati</taxon>
        <taxon>Pseudomonadota</taxon>
        <taxon>Alphaproteobacteria</taxon>
        <taxon>Hyphomicrobiales</taxon>
        <taxon>Bartonellaceae</taxon>
        <taxon>Bartonella</taxon>
    </lineage>
</organism>
<feature type="chain" id="PRO_0000130358" description="Large ribosomal subunit protein uL29">
    <location>
        <begin position="1"/>
        <end position="66"/>
    </location>
</feature>
<dbReference type="EMBL" id="BX897700">
    <property type="protein sequence ID" value="CAF26298.1"/>
    <property type="molecule type" value="Genomic_DNA"/>
</dbReference>
<dbReference type="RefSeq" id="WP_011179544.1">
    <property type="nucleotide sequence ID" value="NC_005955.1"/>
</dbReference>
<dbReference type="SMR" id="Q6FZD0"/>
<dbReference type="GeneID" id="56532829"/>
<dbReference type="KEGG" id="bqu:BQ08150"/>
<dbReference type="eggNOG" id="COG0255">
    <property type="taxonomic scope" value="Bacteria"/>
</dbReference>
<dbReference type="HOGENOM" id="CLU_158491_1_0_5"/>
<dbReference type="OrthoDB" id="9815192at2"/>
<dbReference type="Proteomes" id="UP000000597">
    <property type="component" value="Chromosome"/>
</dbReference>
<dbReference type="GO" id="GO:0022625">
    <property type="term" value="C:cytosolic large ribosomal subunit"/>
    <property type="evidence" value="ECO:0007669"/>
    <property type="project" value="TreeGrafter"/>
</dbReference>
<dbReference type="GO" id="GO:0003735">
    <property type="term" value="F:structural constituent of ribosome"/>
    <property type="evidence" value="ECO:0007669"/>
    <property type="project" value="InterPro"/>
</dbReference>
<dbReference type="GO" id="GO:0006412">
    <property type="term" value="P:translation"/>
    <property type="evidence" value="ECO:0007669"/>
    <property type="project" value="UniProtKB-UniRule"/>
</dbReference>
<dbReference type="CDD" id="cd00427">
    <property type="entry name" value="Ribosomal_L29_HIP"/>
    <property type="match status" value="1"/>
</dbReference>
<dbReference type="FunFam" id="1.10.287.310:FF:000001">
    <property type="entry name" value="50S ribosomal protein L29"/>
    <property type="match status" value="1"/>
</dbReference>
<dbReference type="Gene3D" id="6.10.140.1970">
    <property type="match status" value="1"/>
</dbReference>
<dbReference type="HAMAP" id="MF_00374">
    <property type="entry name" value="Ribosomal_uL29"/>
    <property type="match status" value="1"/>
</dbReference>
<dbReference type="InterPro" id="IPR050063">
    <property type="entry name" value="Ribosomal_protein_uL29"/>
</dbReference>
<dbReference type="InterPro" id="IPR001854">
    <property type="entry name" value="Ribosomal_uL29"/>
</dbReference>
<dbReference type="InterPro" id="IPR036049">
    <property type="entry name" value="Ribosomal_uL29_sf"/>
</dbReference>
<dbReference type="NCBIfam" id="TIGR00012">
    <property type="entry name" value="L29"/>
    <property type="match status" value="1"/>
</dbReference>
<dbReference type="PANTHER" id="PTHR10916">
    <property type="entry name" value="60S RIBOSOMAL PROTEIN L35/50S RIBOSOMAL PROTEIN L29"/>
    <property type="match status" value="1"/>
</dbReference>
<dbReference type="PANTHER" id="PTHR10916:SF0">
    <property type="entry name" value="LARGE RIBOSOMAL SUBUNIT PROTEIN UL29C"/>
    <property type="match status" value="1"/>
</dbReference>
<dbReference type="Pfam" id="PF00831">
    <property type="entry name" value="Ribosomal_L29"/>
    <property type="match status" value="1"/>
</dbReference>
<dbReference type="SUPFAM" id="SSF46561">
    <property type="entry name" value="Ribosomal protein L29 (L29p)"/>
    <property type="match status" value="1"/>
</dbReference>
<accession>Q6FZD0</accession>
<comment type="similarity">
    <text evidence="1">Belongs to the universal ribosomal protein uL29 family.</text>
</comment>
<reference key="1">
    <citation type="journal article" date="2004" name="Proc. Natl. Acad. Sci. U.S.A.">
        <title>The louse-borne human pathogen Bartonella quintana is a genomic derivative of the zoonotic agent Bartonella henselae.</title>
        <authorList>
            <person name="Alsmark U.C.M."/>
            <person name="Frank A.C."/>
            <person name="Karlberg E.O."/>
            <person name="Legault B.-A."/>
            <person name="Ardell D.H."/>
            <person name="Canbaeck B."/>
            <person name="Eriksson A.-S."/>
            <person name="Naeslund A.K."/>
            <person name="Handley S.A."/>
            <person name="Huvet M."/>
            <person name="La Scola B."/>
            <person name="Holmberg M."/>
            <person name="Andersson S.G.E."/>
        </authorList>
    </citation>
    <scope>NUCLEOTIDE SEQUENCE [LARGE SCALE GENOMIC DNA]</scope>
    <source>
        <strain>Toulouse</strain>
    </source>
</reference>
<evidence type="ECO:0000255" key="1">
    <source>
        <dbReference type="HAMAP-Rule" id="MF_00374"/>
    </source>
</evidence>
<evidence type="ECO:0000305" key="2"/>